<proteinExistence type="inferred from homology"/>
<name>CLPP_NICSY</name>
<organism>
    <name type="scientific">Nicotiana sylvestris</name>
    <name type="common">Wood tobacco</name>
    <name type="synonym">South American tobacco</name>
    <dbReference type="NCBI Taxonomy" id="4096"/>
    <lineage>
        <taxon>Eukaryota</taxon>
        <taxon>Viridiplantae</taxon>
        <taxon>Streptophyta</taxon>
        <taxon>Embryophyta</taxon>
        <taxon>Tracheophyta</taxon>
        <taxon>Spermatophyta</taxon>
        <taxon>Magnoliopsida</taxon>
        <taxon>eudicotyledons</taxon>
        <taxon>Gunneridae</taxon>
        <taxon>Pentapetalae</taxon>
        <taxon>asterids</taxon>
        <taxon>lamiids</taxon>
        <taxon>Solanales</taxon>
        <taxon>Solanaceae</taxon>
        <taxon>Nicotianoideae</taxon>
        <taxon>Nicotianeae</taxon>
        <taxon>Nicotiana</taxon>
    </lineage>
</organism>
<dbReference type="EC" id="3.4.21.92" evidence="1"/>
<dbReference type="EMBL" id="AB237912">
    <property type="protein sequence ID" value="BAE46679.1"/>
    <property type="molecule type" value="Genomic_DNA"/>
</dbReference>
<dbReference type="RefSeq" id="YP_358703.1">
    <property type="nucleotide sequence ID" value="NC_007500.1"/>
</dbReference>
<dbReference type="SMR" id="Q3C1K4"/>
<dbReference type="MEROPS" id="S14.002"/>
<dbReference type="GeneID" id="3735056"/>
<dbReference type="KEGG" id="nsy:3735056"/>
<dbReference type="OrthoDB" id="21088at4085"/>
<dbReference type="Proteomes" id="UP000189701">
    <property type="component" value="Chloroplast Pltd"/>
</dbReference>
<dbReference type="GO" id="GO:0009570">
    <property type="term" value="C:chloroplast stroma"/>
    <property type="evidence" value="ECO:0007669"/>
    <property type="project" value="UniProtKB-SubCell"/>
</dbReference>
<dbReference type="GO" id="GO:0009368">
    <property type="term" value="C:endopeptidase Clp complex"/>
    <property type="evidence" value="ECO:0007669"/>
    <property type="project" value="TreeGrafter"/>
</dbReference>
<dbReference type="GO" id="GO:0004176">
    <property type="term" value="F:ATP-dependent peptidase activity"/>
    <property type="evidence" value="ECO:0007669"/>
    <property type="project" value="InterPro"/>
</dbReference>
<dbReference type="GO" id="GO:0051117">
    <property type="term" value="F:ATPase binding"/>
    <property type="evidence" value="ECO:0007669"/>
    <property type="project" value="TreeGrafter"/>
</dbReference>
<dbReference type="GO" id="GO:0004252">
    <property type="term" value="F:serine-type endopeptidase activity"/>
    <property type="evidence" value="ECO:0007669"/>
    <property type="project" value="UniProtKB-UniRule"/>
</dbReference>
<dbReference type="GO" id="GO:0006515">
    <property type="term" value="P:protein quality control for misfolded or incompletely synthesized proteins"/>
    <property type="evidence" value="ECO:0007669"/>
    <property type="project" value="TreeGrafter"/>
</dbReference>
<dbReference type="CDD" id="cd07017">
    <property type="entry name" value="S14_ClpP_2"/>
    <property type="match status" value="1"/>
</dbReference>
<dbReference type="FunFam" id="3.90.226.10:FF:000006">
    <property type="entry name" value="ATP-dependent Clp protease proteolytic subunit"/>
    <property type="match status" value="1"/>
</dbReference>
<dbReference type="Gene3D" id="3.90.226.10">
    <property type="entry name" value="2-enoyl-CoA Hydratase, Chain A, domain 1"/>
    <property type="match status" value="1"/>
</dbReference>
<dbReference type="HAMAP" id="MF_00444">
    <property type="entry name" value="ClpP"/>
    <property type="match status" value="1"/>
</dbReference>
<dbReference type="InterPro" id="IPR001907">
    <property type="entry name" value="ClpP"/>
</dbReference>
<dbReference type="InterPro" id="IPR029045">
    <property type="entry name" value="ClpP/crotonase-like_dom_sf"/>
</dbReference>
<dbReference type="InterPro" id="IPR023562">
    <property type="entry name" value="ClpP/TepA"/>
</dbReference>
<dbReference type="InterPro" id="IPR033135">
    <property type="entry name" value="ClpP_His_AS"/>
</dbReference>
<dbReference type="InterPro" id="IPR018215">
    <property type="entry name" value="ClpP_Ser_AS"/>
</dbReference>
<dbReference type="PANTHER" id="PTHR10381">
    <property type="entry name" value="ATP-DEPENDENT CLP PROTEASE PROTEOLYTIC SUBUNIT"/>
    <property type="match status" value="1"/>
</dbReference>
<dbReference type="PANTHER" id="PTHR10381:SF15">
    <property type="entry name" value="CHLOROPLASTIC ATP-DEPENDENT CLP PROTEASE PROTEOLYTIC SUBUNIT 1"/>
    <property type="match status" value="1"/>
</dbReference>
<dbReference type="Pfam" id="PF00574">
    <property type="entry name" value="CLP_protease"/>
    <property type="match status" value="1"/>
</dbReference>
<dbReference type="PRINTS" id="PR00127">
    <property type="entry name" value="CLPPROTEASEP"/>
</dbReference>
<dbReference type="SUPFAM" id="SSF52096">
    <property type="entry name" value="ClpP/crotonase"/>
    <property type="match status" value="1"/>
</dbReference>
<dbReference type="PROSITE" id="PS00382">
    <property type="entry name" value="CLP_PROTEASE_HIS"/>
    <property type="match status" value="1"/>
</dbReference>
<dbReference type="PROSITE" id="PS00381">
    <property type="entry name" value="CLP_PROTEASE_SER"/>
    <property type="match status" value="1"/>
</dbReference>
<comment type="function">
    <text evidence="1">Cleaves peptides in various proteins in a process that requires ATP hydrolysis. Has a chymotrypsin-like activity. Plays a major role in the degradation of misfolded proteins.</text>
</comment>
<comment type="catalytic activity">
    <reaction evidence="1">
        <text>Hydrolysis of proteins to small peptides in the presence of ATP and magnesium. alpha-casein is the usual test substrate. In the absence of ATP, only oligopeptides shorter than five residues are hydrolyzed (such as succinyl-Leu-Tyr-|-NHMec, and Leu-Tyr-Leu-|-Tyr-Trp, in which cleavage of the -Tyr-|-Leu- and -Tyr-|-Trp bonds also occurs).</text>
        <dbReference type="EC" id="3.4.21.92"/>
    </reaction>
</comment>
<comment type="subunit">
    <text>Component of the chloroplastic Clp protease core complex.</text>
</comment>
<comment type="subcellular location">
    <subcellularLocation>
        <location evidence="1">Plastid</location>
        <location evidence="1">Chloroplast stroma</location>
    </subcellularLocation>
</comment>
<comment type="similarity">
    <text evidence="1">Belongs to the peptidase S14 family.</text>
</comment>
<feature type="chain" id="PRO_0000275292" description="ATP-dependent Clp protease proteolytic subunit">
    <location>
        <begin position="1"/>
        <end position="196"/>
    </location>
</feature>
<feature type="active site" description="Nucleophile" evidence="1">
    <location>
        <position position="101"/>
    </location>
</feature>
<feature type="active site" evidence="1">
    <location>
        <position position="126"/>
    </location>
</feature>
<gene>
    <name evidence="1" type="primary">clpP</name>
</gene>
<reference key="1">
    <citation type="journal article" date="2006" name="Mol. Genet. Genomics">
        <title>The chloroplast genome of Nicotiana sylvestris and Nicotiana tomentosiformis: complete sequencing confirms that the Nicotiana sylvestris progenitor is the maternal genome donor of Nicotiana tabacum.</title>
        <authorList>
            <person name="Yukawa M."/>
            <person name="Tsudzuki T."/>
            <person name="Sugiura M."/>
        </authorList>
    </citation>
    <scope>NUCLEOTIDE SEQUENCE [LARGE SCALE GENOMIC DNA]</scope>
</reference>
<geneLocation type="chloroplast"/>
<evidence type="ECO:0000255" key="1">
    <source>
        <dbReference type="HAMAP-Rule" id="MF_00444"/>
    </source>
</evidence>
<protein>
    <recommendedName>
        <fullName evidence="1">ATP-dependent Clp protease proteolytic subunit</fullName>
        <ecNumber evidence="1">3.4.21.92</ecNumber>
    </recommendedName>
    <alternativeName>
        <fullName evidence="1">Endopeptidase Clp</fullName>
    </alternativeName>
</protein>
<accession>Q3C1K4</accession>
<keyword id="KW-0150">Chloroplast</keyword>
<keyword id="KW-0378">Hydrolase</keyword>
<keyword id="KW-0934">Plastid</keyword>
<keyword id="KW-0645">Protease</keyword>
<keyword id="KW-1185">Reference proteome</keyword>
<keyword id="KW-0720">Serine protease</keyword>
<sequence>MPIGVPKVPFRSPGEEDASWVDVYNRLYRERLLFLGQEVDSEISNQLIGLMVYLSIEDETKDLYLFINSPGGWVIPGVAIYDTMQFVRPDVHTICMGLAASMGSFILVGGEITKRLAFPHARVMIHQPASSFYEAQTGEFVLEAEELLKLRETLTRVYVQRTGKPLWVVSEDMERDVFMSATEAQAYGIVDLVAVE</sequence>